<organism>
    <name type="scientific">Ectopseudomonas mendocina (strain ymp)</name>
    <name type="common">Pseudomonas mendocina</name>
    <dbReference type="NCBI Taxonomy" id="399739"/>
    <lineage>
        <taxon>Bacteria</taxon>
        <taxon>Pseudomonadati</taxon>
        <taxon>Pseudomonadota</taxon>
        <taxon>Gammaproteobacteria</taxon>
        <taxon>Pseudomonadales</taxon>
        <taxon>Pseudomonadaceae</taxon>
        <taxon>Ectopseudomonas</taxon>
    </lineage>
</organism>
<accession>A4XTZ4</accession>
<keyword id="KW-0131">Cell cycle</keyword>
<keyword id="KW-0132">Cell division</keyword>
<keyword id="KW-0143">Chaperone</keyword>
<keyword id="KW-0963">Cytoplasm</keyword>
<keyword id="KW-0413">Isomerase</keyword>
<keyword id="KW-0697">Rotamase</keyword>
<gene>
    <name evidence="1" type="primary">tig</name>
    <name type="ordered locus">Pmen_2049</name>
</gene>
<protein>
    <recommendedName>
        <fullName evidence="1">Trigger factor</fullName>
        <shortName evidence="1">TF</shortName>
        <ecNumber evidence="1">5.2.1.8</ecNumber>
    </recommendedName>
    <alternativeName>
        <fullName evidence="1">PPIase</fullName>
    </alternativeName>
</protein>
<sequence>MQVSVESTSALERRMTVGVPVERIETEVNKRLQQTARRAKVPGFRPGKVPMSVIRQRYEDAARQEALGDLIQATFYEAVVEQKLNPAGAPAVEPKSFEKGKDLEYVATFEVFPEFEVTGFDSIAIERLQADVADSDVDNMLDILRKQNTRFEAVERAAENGDQLNIDFVGKIDGEAFAGGSAKGTQLVLGSGRMIPGFEDALVGVKAGEERVINPTFPEDYQNLDLAGKTAEFAVTVNSVSAPQLPELNDEFFALFGIKEGGLEGFRAEVRKNMERELRQAIKSKVKNQVMDGLLAANPVEVPKALIGNEVNRLRVQAVQQFGGNIKPDQLPAELFEEQAKRRVVLGLIVAEVVKQFDLKPDEARVRELIEEMASAYQEPEQVVAWYYKNDQQMNEVRSVVLEEQVVDTVLQKANVTDKAVSYEDAVKPAEAPKAD</sequence>
<comment type="function">
    <text evidence="1">Involved in protein export. Acts as a chaperone by maintaining the newly synthesized protein in an open conformation. Functions as a peptidyl-prolyl cis-trans isomerase.</text>
</comment>
<comment type="catalytic activity">
    <reaction evidence="1">
        <text>[protein]-peptidylproline (omega=180) = [protein]-peptidylproline (omega=0)</text>
        <dbReference type="Rhea" id="RHEA:16237"/>
        <dbReference type="Rhea" id="RHEA-COMP:10747"/>
        <dbReference type="Rhea" id="RHEA-COMP:10748"/>
        <dbReference type="ChEBI" id="CHEBI:83833"/>
        <dbReference type="ChEBI" id="CHEBI:83834"/>
        <dbReference type="EC" id="5.2.1.8"/>
    </reaction>
</comment>
<comment type="subcellular location">
    <subcellularLocation>
        <location>Cytoplasm</location>
    </subcellularLocation>
    <text evidence="1">About half TF is bound to the ribosome near the polypeptide exit tunnel while the other half is free in the cytoplasm.</text>
</comment>
<comment type="domain">
    <text evidence="1">Consists of 3 domains; the N-terminus binds the ribosome, the middle domain has PPIase activity, while the C-terminus has intrinsic chaperone activity on its own.</text>
</comment>
<comment type="similarity">
    <text evidence="1">Belongs to the FKBP-type PPIase family. Tig subfamily.</text>
</comment>
<dbReference type="EC" id="5.2.1.8" evidence="1"/>
<dbReference type="EMBL" id="CP000680">
    <property type="protein sequence ID" value="ABP84810.1"/>
    <property type="molecule type" value="Genomic_DNA"/>
</dbReference>
<dbReference type="SMR" id="A4XTZ4"/>
<dbReference type="STRING" id="399739.Pmen_2049"/>
<dbReference type="KEGG" id="pmy:Pmen_2049"/>
<dbReference type="PATRIC" id="fig|399739.8.peg.2078"/>
<dbReference type="eggNOG" id="COG0544">
    <property type="taxonomic scope" value="Bacteria"/>
</dbReference>
<dbReference type="HOGENOM" id="CLU_033058_2_0_6"/>
<dbReference type="OrthoDB" id="9767721at2"/>
<dbReference type="GO" id="GO:0005737">
    <property type="term" value="C:cytoplasm"/>
    <property type="evidence" value="ECO:0007669"/>
    <property type="project" value="UniProtKB-SubCell"/>
</dbReference>
<dbReference type="GO" id="GO:0003755">
    <property type="term" value="F:peptidyl-prolyl cis-trans isomerase activity"/>
    <property type="evidence" value="ECO:0007669"/>
    <property type="project" value="UniProtKB-UniRule"/>
</dbReference>
<dbReference type="GO" id="GO:0044183">
    <property type="term" value="F:protein folding chaperone"/>
    <property type="evidence" value="ECO:0007669"/>
    <property type="project" value="TreeGrafter"/>
</dbReference>
<dbReference type="GO" id="GO:0043022">
    <property type="term" value="F:ribosome binding"/>
    <property type="evidence" value="ECO:0007669"/>
    <property type="project" value="TreeGrafter"/>
</dbReference>
<dbReference type="GO" id="GO:0051083">
    <property type="term" value="P:'de novo' cotranslational protein folding"/>
    <property type="evidence" value="ECO:0007669"/>
    <property type="project" value="TreeGrafter"/>
</dbReference>
<dbReference type="GO" id="GO:0051301">
    <property type="term" value="P:cell division"/>
    <property type="evidence" value="ECO:0007669"/>
    <property type="project" value="UniProtKB-KW"/>
</dbReference>
<dbReference type="GO" id="GO:0061077">
    <property type="term" value="P:chaperone-mediated protein folding"/>
    <property type="evidence" value="ECO:0007669"/>
    <property type="project" value="TreeGrafter"/>
</dbReference>
<dbReference type="GO" id="GO:0015031">
    <property type="term" value="P:protein transport"/>
    <property type="evidence" value="ECO:0007669"/>
    <property type="project" value="UniProtKB-UniRule"/>
</dbReference>
<dbReference type="GO" id="GO:0043335">
    <property type="term" value="P:protein unfolding"/>
    <property type="evidence" value="ECO:0007669"/>
    <property type="project" value="TreeGrafter"/>
</dbReference>
<dbReference type="FunFam" id="3.10.50.40:FF:000001">
    <property type="entry name" value="Trigger factor"/>
    <property type="match status" value="1"/>
</dbReference>
<dbReference type="FunFam" id="3.30.70.1050:FF:000001">
    <property type="entry name" value="Trigger factor"/>
    <property type="match status" value="1"/>
</dbReference>
<dbReference type="Gene3D" id="3.10.50.40">
    <property type="match status" value="1"/>
</dbReference>
<dbReference type="Gene3D" id="3.30.70.1050">
    <property type="entry name" value="Trigger factor ribosome-binding domain"/>
    <property type="match status" value="1"/>
</dbReference>
<dbReference type="Gene3D" id="1.10.3120.10">
    <property type="entry name" value="Trigger factor, C-terminal domain"/>
    <property type="match status" value="1"/>
</dbReference>
<dbReference type="HAMAP" id="MF_00303">
    <property type="entry name" value="Trigger_factor_Tig"/>
    <property type="match status" value="1"/>
</dbReference>
<dbReference type="InterPro" id="IPR046357">
    <property type="entry name" value="PPIase_dom_sf"/>
</dbReference>
<dbReference type="InterPro" id="IPR001179">
    <property type="entry name" value="PPIase_FKBP_dom"/>
</dbReference>
<dbReference type="InterPro" id="IPR005215">
    <property type="entry name" value="Trig_fac"/>
</dbReference>
<dbReference type="InterPro" id="IPR008880">
    <property type="entry name" value="Trigger_fac_C"/>
</dbReference>
<dbReference type="InterPro" id="IPR037041">
    <property type="entry name" value="Trigger_fac_C_sf"/>
</dbReference>
<dbReference type="InterPro" id="IPR008881">
    <property type="entry name" value="Trigger_fac_ribosome-bd_bac"/>
</dbReference>
<dbReference type="InterPro" id="IPR036611">
    <property type="entry name" value="Trigger_fac_ribosome-bd_sf"/>
</dbReference>
<dbReference type="InterPro" id="IPR027304">
    <property type="entry name" value="Trigger_fact/SurA_dom_sf"/>
</dbReference>
<dbReference type="NCBIfam" id="TIGR00115">
    <property type="entry name" value="tig"/>
    <property type="match status" value="1"/>
</dbReference>
<dbReference type="PANTHER" id="PTHR30560">
    <property type="entry name" value="TRIGGER FACTOR CHAPERONE AND PEPTIDYL-PROLYL CIS/TRANS ISOMERASE"/>
    <property type="match status" value="1"/>
</dbReference>
<dbReference type="PANTHER" id="PTHR30560:SF3">
    <property type="entry name" value="TRIGGER FACTOR-LIKE PROTEIN TIG, CHLOROPLASTIC"/>
    <property type="match status" value="1"/>
</dbReference>
<dbReference type="Pfam" id="PF00254">
    <property type="entry name" value="FKBP_C"/>
    <property type="match status" value="1"/>
</dbReference>
<dbReference type="Pfam" id="PF05698">
    <property type="entry name" value="Trigger_C"/>
    <property type="match status" value="1"/>
</dbReference>
<dbReference type="Pfam" id="PF05697">
    <property type="entry name" value="Trigger_N"/>
    <property type="match status" value="1"/>
</dbReference>
<dbReference type="PIRSF" id="PIRSF003095">
    <property type="entry name" value="Trigger_factor"/>
    <property type="match status" value="1"/>
</dbReference>
<dbReference type="SUPFAM" id="SSF54534">
    <property type="entry name" value="FKBP-like"/>
    <property type="match status" value="1"/>
</dbReference>
<dbReference type="SUPFAM" id="SSF109998">
    <property type="entry name" value="Triger factor/SurA peptide-binding domain-like"/>
    <property type="match status" value="1"/>
</dbReference>
<dbReference type="SUPFAM" id="SSF102735">
    <property type="entry name" value="Trigger factor ribosome-binding domain"/>
    <property type="match status" value="1"/>
</dbReference>
<dbReference type="PROSITE" id="PS50059">
    <property type="entry name" value="FKBP_PPIASE"/>
    <property type="match status" value="1"/>
</dbReference>
<name>TIG_ECTM1</name>
<evidence type="ECO:0000255" key="1">
    <source>
        <dbReference type="HAMAP-Rule" id="MF_00303"/>
    </source>
</evidence>
<proteinExistence type="inferred from homology"/>
<feature type="chain" id="PRO_1000022735" description="Trigger factor">
    <location>
        <begin position="1"/>
        <end position="436"/>
    </location>
</feature>
<feature type="domain" description="PPIase FKBP-type" evidence="1">
    <location>
        <begin position="161"/>
        <end position="246"/>
    </location>
</feature>
<reference key="1">
    <citation type="submission" date="2007-04" db="EMBL/GenBank/DDBJ databases">
        <title>Complete sequence of Pseudomonas mendocina ymp.</title>
        <authorList>
            <consortium name="US DOE Joint Genome Institute"/>
            <person name="Copeland A."/>
            <person name="Lucas S."/>
            <person name="Lapidus A."/>
            <person name="Barry K."/>
            <person name="Glavina del Rio T."/>
            <person name="Dalin E."/>
            <person name="Tice H."/>
            <person name="Pitluck S."/>
            <person name="Kiss H."/>
            <person name="Brettin T."/>
            <person name="Detter J.C."/>
            <person name="Bruce D."/>
            <person name="Han C."/>
            <person name="Schmutz J."/>
            <person name="Larimer F."/>
            <person name="Land M."/>
            <person name="Hauser L."/>
            <person name="Kyrpides N."/>
            <person name="Mikhailova N."/>
            <person name="Hersman L."/>
            <person name="Dubois J."/>
            <person name="Maurice P."/>
            <person name="Richardson P."/>
        </authorList>
    </citation>
    <scope>NUCLEOTIDE SEQUENCE [LARGE SCALE GENOMIC DNA]</scope>
    <source>
        <strain>ymp</strain>
    </source>
</reference>